<evidence type="ECO:0000255" key="1">
    <source>
        <dbReference type="HAMAP-Rule" id="MF_00366"/>
    </source>
</evidence>
<sequence length="91" mass="10165">MARVTVQDAVEKIGNRFDLVLVAARRARQIQSGGKDALVPEENDKVTVIALREIEEGLITNQILDVRERQEQQEQEAAEIQAVTAIAEGRR</sequence>
<keyword id="KW-0240">DNA-directed RNA polymerase</keyword>
<keyword id="KW-0548">Nucleotidyltransferase</keyword>
<keyword id="KW-0804">Transcription</keyword>
<keyword id="KW-0808">Transferase</keyword>
<protein>
    <recommendedName>
        <fullName evidence="1">DNA-directed RNA polymerase subunit omega</fullName>
        <shortName evidence="1">RNAP omega subunit</shortName>
        <ecNumber evidence="1">2.7.7.6</ecNumber>
    </recommendedName>
    <alternativeName>
        <fullName evidence="1">RNA polymerase omega subunit</fullName>
    </alternativeName>
    <alternativeName>
        <fullName evidence="1">Transcriptase subunit omega</fullName>
    </alternativeName>
</protein>
<gene>
    <name evidence="1" type="primary">rpoZ</name>
    <name type="ordered locus">YPTB0036</name>
</gene>
<name>RPOZ_YERPS</name>
<dbReference type="EC" id="2.7.7.6" evidence="1"/>
<dbReference type="EMBL" id="BX936398">
    <property type="protein sequence ID" value="CAH19276.1"/>
    <property type="molecule type" value="Genomic_DNA"/>
</dbReference>
<dbReference type="RefSeq" id="WP_004392061.1">
    <property type="nucleotide sequence ID" value="NZ_CP009712.1"/>
</dbReference>
<dbReference type="SMR" id="Q66GE6"/>
<dbReference type="GeneID" id="97458311"/>
<dbReference type="KEGG" id="ypo:BZ17_2559"/>
<dbReference type="KEGG" id="yps:YPTB0036"/>
<dbReference type="PATRIC" id="fig|273123.14.peg.2684"/>
<dbReference type="Proteomes" id="UP000001011">
    <property type="component" value="Chromosome"/>
</dbReference>
<dbReference type="GO" id="GO:0000428">
    <property type="term" value="C:DNA-directed RNA polymerase complex"/>
    <property type="evidence" value="ECO:0007669"/>
    <property type="project" value="UniProtKB-KW"/>
</dbReference>
<dbReference type="GO" id="GO:0003677">
    <property type="term" value="F:DNA binding"/>
    <property type="evidence" value="ECO:0007669"/>
    <property type="project" value="UniProtKB-UniRule"/>
</dbReference>
<dbReference type="GO" id="GO:0003899">
    <property type="term" value="F:DNA-directed RNA polymerase activity"/>
    <property type="evidence" value="ECO:0007669"/>
    <property type="project" value="UniProtKB-UniRule"/>
</dbReference>
<dbReference type="GO" id="GO:0006351">
    <property type="term" value="P:DNA-templated transcription"/>
    <property type="evidence" value="ECO:0007669"/>
    <property type="project" value="UniProtKB-UniRule"/>
</dbReference>
<dbReference type="FunFam" id="3.90.940.10:FF:000001">
    <property type="entry name" value="DNA-directed RNA polymerase subunit omega"/>
    <property type="match status" value="1"/>
</dbReference>
<dbReference type="Gene3D" id="3.90.940.10">
    <property type="match status" value="1"/>
</dbReference>
<dbReference type="HAMAP" id="MF_00366">
    <property type="entry name" value="RNApol_bact_RpoZ"/>
    <property type="match status" value="1"/>
</dbReference>
<dbReference type="InterPro" id="IPR003716">
    <property type="entry name" value="DNA-dir_RNA_pol_omega"/>
</dbReference>
<dbReference type="InterPro" id="IPR006110">
    <property type="entry name" value="Pol_omega/Rpo6/RPB6"/>
</dbReference>
<dbReference type="InterPro" id="IPR036161">
    <property type="entry name" value="RPB6/omega-like_sf"/>
</dbReference>
<dbReference type="NCBIfam" id="TIGR00690">
    <property type="entry name" value="rpoZ"/>
    <property type="match status" value="1"/>
</dbReference>
<dbReference type="PANTHER" id="PTHR34476">
    <property type="entry name" value="DNA-DIRECTED RNA POLYMERASE SUBUNIT OMEGA"/>
    <property type="match status" value="1"/>
</dbReference>
<dbReference type="PANTHER" id="PTHR34476:SF1">
    <property type="entry name" value="DNA-DIRECTED RNA POLYMERASE SUBUNIT OMEGA"/>
    <property type="match status" value="1"/>
</dbReference>
<dbReference type="Pfam" id="PF01192">
    <property type="entry name" value="RNA_pol_Rpb6"/>
    <property type="match status" value="1"/>
</dbReference>
<dbReference type="SMART" id="SM01409">
    <property type="entry name" value="RNA_pol_Rpb6"/>
    <property type="match status" value="1"/>
</dbReference>
<dbReference type="SUPFAM" id="SSF63562">
    <property type="entry name" value="RPB6/omega subunit-like"/>
    <property type="match status" value="1"/>
</dbReference>
<comment type="function">
    <text evidence="1">Promotes RNA polymerase assembly. Latches the N- and C-terminal regions of the beta' subunit thereby facilitating its interaction with the beta and alpha subunits.</text>
</comment>
<comment type="catalytic activity">
    <reaction evidence="1">
        <text>RNA(n) + a ribonucleoside 5'-triphosphate = RNA(n+1) + diphosphate</text>
        <dbReference type="Rhea" id="RHEA:21248"/>
        <dbReference type="Rhea" id="RHEA-COMP:14527"/>
        <dbReference type="Rhea" id="RHEA-COMP:17342"/>
        <dbReference type="ChEBI" id="CHEBI:33019"/>
        <dbReference type="ChEBI" id="CHEBI:61557"/>
        <dbReference type="ChEBI" id="CHEBI:140395"/>
        <dbReference type="EC" id="2.7.7.6"/>
    </reaction>
</comment>
<comment type="subunit">
    <text evidence="1">The RNAP catalytic core consists of 2 alpha, 1 beta, 1 beta' and 1 omega subunit. When a sigma factor is associated with the core the holoenzyme is formed, which can initiate transcription.</text>
</comment>
<comment type="similarity">
    <text evidence="1">Belongs to the RNA polymerase subunit omega family.</text>
</comment>
<organism>
    <name type="scientific">Yersinia pseudotuberculosis serotype I (strain IP32953)</name>
    <dbReference type="NCBI Taxonomy" id="273123"/>
    <lineage>
        <taxon>Bacteria</taxon>
        <taxon>Pseudomonadati</taxon>
        <taxon>Pseudomonadota</taxon>
        <taxon>Gammaproteobacteria</taxon>
        <taxon>Enterobacterales</taxon>
        <taxon>Yersiniaceae</taxon>
        <taxon>Yersinia</taxon>
    </lineage>
</organism>
<reference key="1">
    <citation type="journal article" date="2004" name="Proc. Natl. Acad. Sci. U.S.A.">
        <title>Insights into the evolution of Yersinia pestis through whole-genome comparison with Yersinia pseudotuberculosis.</title>
        <authorList>
            <person name="Chain P.S.G."/>
            <person name="Carniel E."/>
            <person name="Larimer F.W."/>
            <person name="Lamerdin J."/>
            <person name="Stoutland P.O."/>
            <person name="Regala W.M."/>
            <person name="Georgescu A.M."/>
            <person name="Vergez L.M."/>
            <person name="Land M.L."/>
            <person name="Motin V.L."/>
            <person name="Brubaker R.R."/>
            <person name="Fowler J."/>
            <person name="Hinnebusch J."/>
            <person name="Marceau M."/>
            <person name="Medigue C."/>
            <person name="Simonet M."/>
            <person name="Chenal-Francisque V."/>
            <person name="Souza B."/>
            <person name="Dacheux D."/>
            <person name="Elliott J.M."/>
            <person name="Derbise A."/>
            <person name="Hauser L.J."/>
            <person name="Garcia E."/>
        </authorList>
    </citation>
    <scope>NUCLEOTIDE SEQUENCE [LARGE SCALE GENOMIC DNA]</scope>
    <source>
        <strain>IP32953</strain>
    </source>
</reference>
<feature type="chain" id="PRO_0000237534" description="DNA-directed RNA polymerase subunit omega">
    <location>
        <begin position="1"/>
        <end position="91"/>
    </location>
</feature>
<accession>Q66GE6</accession>
<proteinExistence type="inferred from homology"/>